<protein>
    <recommendedName>
        <fullName>Protein phosphatase 1 regulatory subunit 37</fullName>
    </recommendedName>
    <alternativeName>
        <fullName>Leucine-rich repeat-containing protein 68</fullName>
    </alternativeName>
</protein>
<evidence type="ECO:0000250" key="1"/>
<evidence type="ECO:0000250" key="2">
    <source>
        <dbReference type="UniProtKB" id="O75864"/>
    </source>
</evidence>
<evidence type="ECO:0000256" key="3">
    <source>
        <dbReference type="SAM" id="MobiDB-lite"/>
    </source>
</evidence>
<evidence type="ECO:0000305" key="4"/>
<evidence type="ECO:0000312" key="5">
    <source>
        <dbReference type="EMBL" id="AAI66755.1"/>
    </source>
</evidence>
<evidence type="ECO:0000312" key="6">
    <source>
        <dbReference type="EMBL" id="EDM08187.1"/>
    </source>
</evidence>
<evidence type="ECO:0007744" key="7">
    <source>
    </source>
</evidence>
<evidence type="ECO:0007744" key="8">
    <source>
    </source>
</evidence>
<gene>
    <name type="primary">Ppp1r37</name>
    <name type="synonym">Lrrc68</name>
</gene>
<feature type="chain" id="PRO_0000398617" description="Protein phosphatase 1 regulatory subunit 37">
    <location>
        <begin position="1"/>
        <end position="710"/>
    </location>
</feature>
<feature type="repeat" description="LRR 1">
    <location>
        <begin position="224"/>
        <end position="244"/>
    </location>
</feature>
<feature type="repeat" description="LRR 2">
    <location>
        <begin position="252"/>
        <end position="273"/>
    </location>
</feature>
<feature type="repeat" description="LRR 3">
    <location>
        <begin position="281"/>
        <end position="301"/>
    </location>
</feature>
<feature type="repeat" description="LRR 4">
    <location>
        <begin position="310"/>
        <end position="330"/>
    </location>
</feature>
<feature type="repeat" description="LRR 5">
    <location>
        <begin position="338"/>
        <end position="358"/>
    </location>
</feature>
<feature type="region of interest" description="Disordered" evidence="3">
    <location>
        <begin position="1"/>
        <end position="46"/>
    </location>
</feature>
<feature type="region of interest" description="Disordered" evidence="3">
    <location>
        <begin position="487"/>
        <end position="677"/>
    </location>
</feature>
<feature type="compositionally biased region" description="Pro residues" evidence="3">
    <location>
        <begin position="1"/>
        <end position="12"/>
    </location>
</feature>
<feature type="compositionally biased region" description="Acidic residues" evidence="3">
    <location>
        <begin position="16"/>
        <end position="26"/>
    </location>
</feature>
<feature type="compositionally biased region" description="Low complexity" evidence="3">
    <location>
        <begin position="27"/>
        <end position="38"/>
    </location>
</feature>
<feature type="compositionally biased region" description="Acidic residues" evidence="3">
    <location>
        <begin position="512"/>
        <end position="531"/>
    </location>
</feature>
<feature type="compositionally biased region" description="Low complexity" evidence="3">
    <location>
        <begin position="543"/>
        <end position="565"/>
    </location>
</feature>
<feature type="compositionally biased region" description="Pro residues" evidence="3">
    <location>
        <begin position="603"/>
        <end position="624"/>
    </location>
</feature>
<feature type="compositionally biased region" description="Polar residues" evidence="3">
    <location>
        <begin position="637"/>
        <end position="649"/>
    </location>
</feature>
<feature type="compositionally biased region" description="Low complexity" evidence="3">
    <location>
        <begin position="656"/>
        <end position="676"/>
    </location>
</feature>
<feature type="modified residue" description="Phosphoserine" evidence="2">
    <location>
        <position position="54"/>
    </location>
</feature>
<feature type="modified residue" description="Phosphoserine" evidence="7">
    <location>
        <position position="60"/>
    </location>
</feature>
<feature type="modified residue" description="Phosphoserine" evidence="8">
    <location>
        <position position="581"/>
    </location>
</feature>
<dbReference type="EMBL" id="CH473979">
    <property type="protein sequence ID" value="EDM08187.1"/>
    <property type="molecule type" value="Genomic_DNA"/>
</dbReference>
<dbReference type="EMBL" id="BC166755">
    <property type="protein sequence ID" value="AAI66755.1"/>
    <property type="molecule type" value="mRNA"/>
</dbReference>
<dbReference type="RefSeq" id="NP_001100952.1">
    <property type="nucleotide sequence ID" value="NM_001107482.1"/>
</dbReference>
<dbReference type="SMR" id="B2RYF1"/>
<dbReference type="FunCoup" id="B2RYF1">
    <property type="interactions" value="1337"/>
</dbReference>
<dbReference type="STRING" id="10116.ENSRNOP00000023866"/>
<dbReference type="CarbonylDB" id="B2RYF1"/>
<dbReference type="iPTMnet" id="B2RYF1"/>
<dbReference type="PhosphoSitePlus" id="B2RYF1"/>
<dbReference type="jPOST" id="B2RYF1"/>
<dbReference type="PaxDb" id="10116-ENSRNOP00000023866"/>
<dbReference type="PeptideAtlas" id="B2RYF1"/>
<dbReference type="Ensembl" id="ENSRNOT00000023867.7">
    <property type="protein sequence ID" value="ENSRNOP00000023866.5"/>
    <property type="gene ID" value="ENSRNOG00000017692.7"/>
</dbReference>
<dbReference type="GeneID" id="308398"/>
<dbReference type="KEGG" id="rno:308398"/>
<dbReference type="UCSC" id="RGD:1595870">
    <property type="organism name" value="rat"/>
</dbReference>
<dbReference type="AGR" id="RGD:1595870"/>
<dbReference type="CTD" id="284352"/>
<dbReference type="RGD" id="1595870">
    <property type="gene designation" value="Ppp1r37"/>
</dbReference>
<dbReference type="eggNOG" id="KOG1908">
    <property type="taxonomic scope" value="Eukaryota"/>
</dbReference>
<dbReference type="GeneTree" id="ENSGT00940000157454"/>
<dbReference type="HOGENOM" id="CLU_014302_0_0_1"/>
<dbReference type="InParanoid" id="B2RYF1"/>
<dbReference type="OMA" id="EHELRCP"/>
<dbReference type="OrthoDB" id="84948at9989"/>
<dbReference type="PhylomeDB" id="B2RYF1"/>
<dbReference type="PRO" id="PR:B2RYF1"/>
<dbReference type="Proteomes" id="UP000002494">
    <property type="component" value="Chromosome 1"/>
</dbReference>
<dbReference type="Proteomes" id="UP000234681">
    <property type="component" value="Chromosome 1"/>
</dbReference>
<dbReference type="Bgee" id="ENSRNOG00000017692">
    <property type="expression patterns" value="Expressed in frontal cortex and 20 other cell types or tissues"/>
</dbReference>
<dbReference type="GO" id="GO:0004864">
    <property type="term" value="F:protein phosphatase inhibitor activity"/>
    <property type="evidence" value="ECO:0007669"/>
    <property type="project" value="UniProtKB-KW"/>
</dbReference>
<dbReference type="CDD" id="cd00116">
    <property type="entry name" value="LRR_RI"/>
    <property type="match status" value="1"/>
</dbReference>
<dbReference type="FunFam" id="3.80.10.10:FF:000324">
    <property type="entry name" value="Protein phosphatase 1 regulatory subunit 37"/>
    <property type="match status" value="1"/>
</dbReference>
<dbReference type="Gene3D" id="3.80.10.10">
    <property type="entry name" value="Ribonuclease Inhibitor"/>
    <property type="match status" value="1"/>
</dbReference>
<dbReference type="InterPro" id="IPR001611">
    <property type="entry name" value="Leu-rich_rpt"/>
</dbReference>
<dbReference type="InterPro" id="IPR032675">
    <property type="entry name" value="LRR_dom_sf"/>
</dbReference>
<dbReference type="InterPro" id="IPR051279">
    <property type="entry name" value="PP1-Reg/Actin-Interact_Protein"/>
</dbReference>
<dbReference type="PANTHER" id="PTHR24112">
    <property type="entry name" value="LEUCINE-RICH REPEAT, ISOFORM F-RELATED"/>
    <property type="match status" value="1"/>
</dbReference>
<dbReference type="PANTHER" id="PTHR24112:SF9">
    <property type="entry name" value="PROTEIN PHOSPHATASE 1 REGULATORY SUBUNIT 37"/>
    <property type="match status" value="1"/>
</dbReference>
<dbReference type="Pfam" id="PF13516">
    <property type="entry name" value="LRR_6"/>
    <property type="match status" value="3"/>
</dbReference>
<dbReference type="SMART" id="SM00368">
    <property type="entry name" value="LRR_RI"/>
    <property type="match status" value="7"/>
</dbReference>
<dbReference type="SUPFAM" id="SSF52047">
    <property type="entry name" value="RNI-like"/>
    <property type="match status" value="1"/>
</dbReference>
<dbReference type="PROSITE" id="PS51450">
    <property type="entry name" value="LRR"/>
    <property type="match status" value="5"/>
</dbReference>
<sequence>MEIPPQEAPPGPGADADADAEAEEAPAEAGSSSGASPPTDGRLKAAAKRVTFPSDEDIVSGAVEPKDPWRHAQNVTVDEVISAYRQACQKLNCRQIPKLLRQLQEFTDLEQRINCLDLKGEKLDYKTCEALEEVFKRLQFKVVDLEQTNLDEDGASALFDMIEYYESATHLNISFNKHIGTRGWQAAAHMMRKTSCLQYLDARNTPLLDHSAPFVARALRIRSSLAVLHLENASLSGRPLMLLATALKMNMNLQELYLADNKLNGLQDSAQLGNLLKFNCSLQILDLRNNHVLDSGLAYICEGLKEQRKGLVTLVLWNNQLTHTGMAFLGMALPHTQSLETLNLGHNPIGNEGVRNLKNGLISNRSVLRLGLASTKLTCEGAVAVAEFIAESPRLLRLDLRENEIKTGGLMALSLALKVNHSLLRLDLDREPKKEPVKSFIETQKALLAEIQNGCKRNFVLVREREEKQQLQPSASMPEITITAPQPLEESGDLPAMGAQNGTPGPGPGPDSDSDSDSDREEQEEEEEDQSDQQRDEGGTDQSSSAPCPALLPSTDSLGPGDKSPPGSPSSPTEQRISVSSPGRGHKVFVVTRVESPPERPEPPVPPTSVSSPPPSPPSPPASPPSQTMDTQDPESSEAQPQTEPSQAGQPLPNGLKPEFALALAPEAPPGLEAKGSSCSLEHALHRSHGVSKLEELLLEASQEAPRDTL</sequence>
<reference evidence="6" key="1">
    <citation type="submission" date="2005-09" db="EMBL/GenBank/DDBJ databases">
        <authorList>
            <person name="Mural R.J."/>
            <person name="Adams M.D."/>
            <person name="Myers E.W."/>
            <person name="Smith H.O."/>
            <person name="Venter J.C."/>
        </authorList>
    </citation>
    <scope>NUCLEOTIDE SEQUENCE [LARGE SCALE GENOMIC DNA]</scope>
</reference>
<reference evidence="5" key="2">
    <citation type="journal article" date="2004" name="Genome Res.">
        <title>The status, quality, and expansion of the NIH full-length cDNA project: the Mammalian Gene Collection (MGC).</title>
        <authorList>
            <consortium name="The MGC Project Team"/>
        </authorList>
    </citation>
    <scope>NUCLEOTIDE SEQUENCE [LARGE SCALE MRNA]</scope>
    <source>
        <tissue evidence="5">Prostate</tissue>
    </source>
</reference>
<reference key="3">
    <citation type="journal article" date="2006" name="Proc. Natl. Acad. Sci. U.S.A.">
        <title>Quantitative phosphoproteomics of vasopressin-sensitive renal cells: regulation of aquaporin-2 phosphorylation at two sites.</title>
        <authorList>
            <person name="Hoffert J.D."/>
            <person name="Pisitkun T."/>
            <person name="Wang G."/>
            <person name="Shen R.-F."/>
            <person name="Knepper M.A."/>
        </authorList>
    </citation>
    <scope>PHOSPHORYLATION [LARGE SCALE ANALYSIS] AT SER-60</scope>
    <scope>IDENTIFICATION BY MASS SPECTROMETRY [LARGE SCALE ANALYSIS]</scope>
</reference>
<reference key="4">
    <citation type="journal article" date="2012" name="Nat. Commun.">
        <title>Quantitative maps of protein phosphorylation sites across 14 different rat organs and tissues.</title>
        <authorList>
            <person name="Lundby A."/>
            <person name="Secher A."/>
            <person name="Lage K."/>
            <person name="Nordsborg N.B."/>
            <person name="Dmytriyev A."/>
            <person name="Lundby C."/>
            <person name="Olsen J.V."/>
        </authorList>
    </citation>
    <scope>PHOSPHORYLATION [LARGE SCALE ANALYSIS] AT SER-581</scope>
    <scope>IDENTIFICATION BY MASS SPECTROMETRY [LARGE SCALE ANALYSIS]</scope>
</reference>
<name>PPR37_RAT</name>
<accession>B2RYF1</accession>
<proteinExistence type="evidence at protein level"/>
<organism>
    <name type="scientific">Rattus norvegicus</name>
    <name type="common">Rat</name>
    <dbReference type="NCBI Taxonomy" id="10116"/>
    <lineage>
        <taxon>Eukaryota</taxon>
        <taxon>Metazoa</taxon>
        <taxon>Chordata</taxon>
        <taxon>Craniata</taxon>
        <taxon>Vertebrata</taxon>
        <taxon>Euteleostomi</taxon>
        <taxon>Mammalia</taxon>
        <taxon>Eutheria</taxon>
        <taxon>Euarchontoglires</taxon>
        <taxon>Glires</taxon>
        <taxon>Rodentia</taxon>
        <taxon>Myomorpha</taxon>
        <taxon>Muroidea</taxon>
        <taxon>Muridae</taxon>
        <taxon>Murinae</taxon>
        <taxon>Rattus</taxon>
    </lineage>
</organism>
<comment type="function">
    <text evidence="1">Inhibits phosphatase activity of protein phosphatase 1 (PP1) complexes.</text>
</comment>
<comment type="subunit">
    <text evidence="1">Interacts with PPP1CA.</text>
</comment>
<comment type="similarity">
    <text evidence="4">Belongs to the PPP1R37 family.</text>
</comment>
<keyword id="KW-0433">Leucine-rich repeat</keyword>
<keyword id="KW-0597">Phosphoprotein</keyword>
<keyword id="KW-0650">Protein phosphatase inhibitor</keyword>
<keyword id="KW-1185">Reference proteome</keyword>
<keyword id="KW-0677">Repeat</keyword>